<accession>B3CNB7</accession>
<organism>
    <name type="scientific">Wolbachia pipientis subsp. Culex pipiens (strain wPip)</name>
    <dbReference type="NCBI Taxonomy" id="570417"/>
    <lineage>
        <taxon>Bacteria</taxon>
        <taxon>Pseudomonadati</taxon>
        <taxon>Pseudomonadota</taxon>
        <taxon>Alphaproteobacteria</taxon>
        <taxon>Rickettsiales</taxon>
        <taxon>Anaplasmataceae</taxon>
        <taxon>Wolbachieae</taxon>
        <taxon>Wolbachia</taxon>
    </lineage>
</organism>
<sequence>MAKKNASLLVKLVSTATKTTKTGEEKLTGYFCVKKRNPKNLPKKLEFRKYDPVVRRHVLFKEEKLK</sequence>
<protein>
    <recommendedName>
        <fullName evidence="1">Large ribosomal subunit protein bL33</fullName>
    </recommendedName>
    <alternativeName>
        <fullName evidence="2">50S ribosomal protein L33</fullName>
    </alternativeName>
</protein>
<feature type="chain" id="PRO_1000115164" description="Large ribosomal subunit protein bL33">
    <location>
        <begin position="1"/>
        <end position="66"/>
    </location>
</feature>
<dbReference type="EMBL" id="AM999887">
    <property type="protein sequence ID" value="CAQ54250.1"/>
    <property type="molecule type" value="Genomic_DNA"/>
</dbReference>
<dbReference type="RefSeq" id="WP_012481745.1">
    <property type="nucleotide sequence ID" value="NC_010981.1"/>
</dbReference>
<dbReference type="SMR" id="B3CNB7"/>
<dbReference type="KEGG" id="wpi:WP0142"/>
<dbReference type="eggNOG" id="COG0267">
    <property type="taxonomic scope" value="Bacteria"/>
</dbReference>
<dbReference type="HOGENOM" id="CLU_190949_1_0_5"/>
<dbReference type="Proteomes" id="UP000008814">
    <property type="component" value="Chromosome"/>
</dbReference>
<dbReference type="GO" id="GO:0005737">
    <property type="term" value="C:cytoplasm"/>
    <property type="evidence" value="ECO:0007669"/>
    <property type="project" value="UniProtKB-ARBA"/>
</dbReference>
<dbReference type="GO" id="GO:0015934">
    <property type="term" value="C:large ribosomal subunit"/>
    <property type="evidence" value="ECO:0007669"/>
    <property type="project" value="TreeGrafter"/>
</dbReference>
<dbReference type="GO" id="GO:0003735">
    <property type="term" value="F:structural constituent of ribosome"/>
    <property type="evidence" value="ECO:0007669"/>
    <property type="project" value="InterPro"/>
</dbReference>
<dbReference type="GO" id="GO:0006412">
    <property type="term" value="P:translation"/>
    <property type="evidence" value="ECO:0007669"/>
    <property type="project" value="UniProtKB-UniRule"/>
</dbReference>
<dbReference type="Gene3D" id="2.20.28.120">
    <property type="entry name" value="Ribosomal protein L33"/>
    <property type="match status" value="1"/>
</dbReference>
<dbReference type="HAMAP" id="MF_00294">
    <property type="entry name" value="Ribosomal_bL33"/>
    <property type="match status" value="1"/>
</dbReference>
<dbReference type="InterPro" id="IPR001705">
    <property type="entry name" value="Ribosomal_bL33"/>
</dbReference>
<dbReference type="InterPro" id="IPR038584">
    <property type="entry name" value="Ribosomal_bL33_sf"/>
</dbReference>
<dbReference type="InterPro" id="IPR011332">
    <property type="entry name" value="Ribosomal_zn-bd"/>
</dbReference>
<dbReference type="NCBIfam" id="NF001860">
    <property type="entry name" value="PRK00595.1"/>
    <property type="match status" value="1"/>
</dbReference>
<dbReference type="NCBIfam" id="TIGR01023">
    <property type="entry name" value="rpmG_bact"/>
    <property type="match status" value="1"/>
</dbReference>
<dbReference type="PANTHER" id="PTHR15238">
    <property type="entry name" value="54S RIBOSOMAL PROTEIN L39, MITOCHONDRIAL"/>
    <property type="match status" value="1"/>
</dbReference>
<dbReference type="PANTHER" id="PTHR15238:SF1">
    <property type="entry name" value="LARGE RIBOSOMAL SUBUNIT PROTEIN BL33M"/>
    <property type="match status" value="1"/>
</dbReference>
<dbReference type="Pfam" id="PF00471">
    <property type="entry name" value="Ribosomal_L33"/>
    <property type="match status" value="1"/>
</dbReference>
<dbReference type="SUPFAM" id="SSF57829">
    <property type="entry name" value="Zn-binding ribosomal proteins"/>
    <property type="match status" value="1"/>
</dbReference>
<comment type="similarity">
    <text evidence="1">Belongs to the bacterial ribosomal protein bL33 family.</text>
</comment>
<name>RL33_WOLPP</name>
<proteinExistence type="inferred from homology"/>
<evidence type="ECO:0000255" key="1">
    <source>
        <dbReference type="HAMAP-Rule" id="MF_00294"/>
    </source>
</evidence>
<evidence type="ECO:0000305" key="2"/>
<keyword id="KW-0687">Ribonucleoprotein</keyword>
<keyword id="KW-0689">Ribosomal protein</keyword>
<reference key="1">
    <citation type="journal article" date="2008" name="Mol. Biol. Evol.">
        <title>Genome evolution of Wolbachia strain wPip from the Culex pipiens group.</title>
        <authorList>
            <person name="Klasson L."/>
            <person name="Walker T."/>
            <person name="Sebaihia M."/>
            <person name="Sanders M.J."/>
            <person name="Quail M.A."/>
            <person name="Lord A."/>
            <person name="Sanders S."/>
            <person name="Earl J."/>
            <person name="O'Neill S.L."/>
            <person name="Thomson N."/>
            <person name="Sinkins S.P."/>
            <person name="Parkhill J."/>
        </authorList>
    </citation>
    <scope>NUCLEOTIDE SEQUENCE [LARGE SCALE GENOMIC DNA]</scope>
    <source>
        <strain>wPip</strain>
    </source>
</reference>
<gene>
    <name evidence="1" type="primary">rpmG</name>
    <name type="ordered locus">WP0142</name>
</gene>